<feature type="chain" id="PRO_1000190460" description="33 kDa chaperonin">
    <location>
        <begin position="1"/>
        <end position="292"/>
    </location>
</feature>
<feature type="disulfide bond" description="Redox-active" evidence="1">
    <location>
        <begin position="230"/>
        <end position="232"/>
    </location>
</feature>
<feature type="disulfide bond" description="Redox-active" evidence="1">
    <location>
        <begin position="263"/>
        <end position="266"/>
    </location>
</feature>
<accession>B7MDM6</accession>
<name>HSLO_ECO45</name>
<comment type="function">
    <text evidence="1">Redox regulated molecular chaperone. Protects both thermally unfolding and oxidatively damaged proteins from irreversible aggregation. Plays an important role in the bacterial defense system toward oxidative stress.</text>
</comment>
<comment type="subcellular location">
    <subcellularLocation>
        <location evidence="1">Cytoplasm</location>
    </subcellularLocation>
</comment>
<comment type="PTM">
    <text evidence="1">Under oxidizing conditions two disulfide bonds are formed involving the reactive cysteines. Under reducing conditions zinc is bound to the reactive cysteines and the protein is inactive.</text>
</comment>
<comment type="similarity">
    <text evidence="1">Belongs to the HSP33 family.</text>
</comment>
<evidence type="ECO:0000255" key="1">
    <source>
        <dbReference type="HAMAP-Rule" id="MF_00117"/>
    </source>
</evidence>
<gene>
    <name evidence="1" type="primary">hslO</name>
    <name type="ordered locus">ECS88_3787</name>
</gene>
<proteinExistence type="inferred from homology"/>
<keyword id="KW-0143">Chaperone</keyword>
<keyword id="KW-0963">Cytoplasm</keyword>
<keyword id="KW-1015">Disulfide bond</keyword>
<keyword id="KW-0676">Redox-active center</keyword>
<keyword id="KW-1185">Reference proteome</keyword>
<keyword id="KW-0346">Stress response</keyword>
<keyword id="KW-0862">Zinc</keyword>
<sequence length="292" mass="32534">MPQHDQLHRYLFENFAVRGELVTVSETLQQILENHDYPQPVKNVLAELLVATSLLTATLKFDGDITVQLQGDGPMNLAVINGNNNQQMRGVARVQGEIPENADLKTLVGNGYVVITITPSEGERYQGVVGLEGDTLAACLEDYFMRSEQLPTRLFIRTGDVDGKPAAGGMLLQVMPAQNAQQDDFDHLATLTETIKTEELLTLPANEVLWRLYHEEEVTVYDPQDVEFKCTCSRERCADALKTLPDEEVDSILAEDGEIDMHCDYCGNHYLFNAMDIAEIRNNASPADPQVH</sequence>
<reference key="1">
    <citation type="journal article" date="2009" name="PLoS Genet.">
        <title>Organised genome dynamics in the Escherichia coli species results in highly diverse adaptive paths.</title>
        <authorList>
            <person name="Touchon M."/>
            <person name="Hoede C."/>
            <person name="Tenaillon O."/>
            <person name="Barbe V."/>
            <person name="Baeriswyl S."/>
            <person name="Bidet P."/>
            <person name="Bingen E."/>
            <person name="Bonacorsi S."/>
            <person name="Bouchier C."/>
            <person name="Bouvet O."/>
            <person name="Calteau A."/>
            <person name="Chiapello H."/>
            <person name="Clermont O."/>
            <person name="Cruveiller S."/>
            <person name="Danchin A."/>
            <person name="Diard M."/>
            <person name="Dossat C."/>
            <person name="Karoui M.E."/>
            <person name="Frapy E."/>
            <person name="Garry L."/>
            <person name="Ghigo J.M."/>
            <person name="Gilles A.M."/>
            <person name="Johnson J."/>
            <person name="Le Bouguenec C."/>
            <person name="Lescat M."/>
            <person name="Mangenot S."/>
            <person name="Martinez-Jehanne V."/>
            <person name="Matic I."/>
            <person name="Nassif X."/>
            <person name="Oztas S."/>
            <person name="Petit M.A."/>
            <person name="Pichon C."/>
            <person name="Rouy Z."/>
            <person name="Ruf C.S."/>
            <person name="Schneider D."/>
            <person name="Tourret J."/>
            <person name="Vacherie B."/>
            <person name="Vallenet D."/>
            <person name="Medigue C."/>
            <person name="Rocha E.P.C."/>
            <person name="Denamur E."/>
        </authorList>
    </citation>
    <scope>NUCLEOTIDE SEQUENCE [LARGE SCALE GENOMIC DNA]</scope>
    <source>
        <strain>S88 / ExPEC</strain>
    </source>
</reference>
<protein>
    <recommendedName>
        <fullName evidence="1">33 kDa chaperonin</fullName>
    </recommendedName>
    <alternativeName>
        <fullName evidence="1">Heat shock protein 33 homolog</fullName>
        <shortName evidence="1">HSP33</shortName>
    </alternativeName>
</protein>
<organism>
    <name type="scientific">Escherichia coli O45:K1 (strain S88 / ExPEC)</name>
    <dbReference type="NCBI Taxonomy" id="585035"/>
    <lineage>
        <taxon>Bacteria</taxon>
        <taxon>Pseudomonadati</taxon>
        <taxon>Pseudomonadota</taxon>
        <taxon>Gammaproteobacteria</taxon>
        <taxon>Enterobacterales</taxon>
        <taxon>Enterobacteriaceae</taxon>
        <taxon>Escherichia</taxon>
    </lineage>
</organism>
<dbReference type="EMBL" id="CU928161">
    <property type="protein sequence ID" value="CAR05001.1"/>
    <property type="molecule type" value="Genomic_DNA"/>
</dbReference>
<dbReference type="RefSeq" id="WP_001135574.1">
    <property type="nucleotide sequence ID" value="NC_011742.1"/>
</dbReference>
<dbReference type="SMR" id="B7MDM6"/>
<dbReference type="GeneID" id="93778597"/>
<dbReference type="KEGG" id="ecz:ECS88_3787"/>
<dbReference type="HOGENOM" id="CLU_054493_0_0_6"/>
<dbReference type="Proteomes" id="UP000000747">
    <property type="component" value="Chromosome"/>
</dbReference>
<dbReference type="GO" id="GO:0005737">
    <property type="term" value="C:cytoplasm"/>
    <property type="evidence" value="ECO:0007669"/>
    <property type="project" value="UniProtKB-SubCell"/>
</dbReference>
<dbReference type="GO" id="GO:0044183">
    <property type="term" value="F:protein folding chaperone"/>
    <property type="evidence" value="ECO:0007669"/>
    <property type="project" value="TreeGrafter"/>
</dbReference>
<dbReference type="GO" id="GO:0051082">
    <property type="term" value="F:unfolded protein binding"/>
    <property type="evidence" value="ECO:0007669"/>
    <property type="project" value="UniProtKB-UniRule"/>
</dbReference>
<dbReference type="GO" id="GO:0042026">
    <property type="term" value="P:protein refolding"/>
    <property type="evidence" value="ECO:0007669"/>
    <property type="project" value="TreeGrafter"/>
</dbReference>
<dbReference type="CDD" id="cd00498">
    <property type="entry name" value="Hsp33"/>
    <property type="match status" value="1"/>
</dbReference>
<dbReference type="FunFam" id="3.55.30.10:FF:000001">
    <property type="entry name" value="33 kDa chaperonin"/>
    <property type="match status" value="1"/>
</dbReference>
<dbReference type="Gene3D" id="1.10.287.480">
    <property type="entry name" value="helix hairpin bin"/>
    <property type="match status" value="1"/>
</dbReference>
<dbReference type="Gene3D" id="3.55.30.10">
    <property type="entry name" value="Hsp33 domain"/>
    <property type="match status" value="1"/>
</dbReference>
<dbReference type="Gene3D" id="3.90.1280.10">
    <property type="entry name" value="HSP33 redox switch-like"/>
    <property type="match status" value="1"/>
</dbReference>
<dbReference type="HAMAP" id="MF_00117">
    <property type="entry name" value="HslO"/>
    <property type="match status" value="1"/>
</dbReference>
<dbReference type="InterPro" id="IPR000397">
    <property type="entry name" value="Heat_shock_Hsp33"/>
</dbReference>
<dbReference type="InterPro" id="IPR016154">
    <property type="entry name" value="Heat_shock_Hsp33_C"/>
</dbReference>
<dbReference type="InterPro" id="IPR016153">
    <property type="entry name" value="Heat_shock_Hsp33_N"/>
</dbReference>
<dbReference type="InterPro" id="IPR023212">
    <property type="entry name" value="Hsp33_helix_hairpin_bin_dom_sf"/>
</dbReference>
<dbReference type="NCBIfam" id="NF001033">
    <property type="entry name" value="PRK00114.1"/>
    <property type="match status" value="1"/>
</dbReference>
<dbReference type="PANTHER" id="PTHR30111">
    <property type="entry name" value="33 KDA CHAPERONIN"/>
    <property type="match status" value="1"/>
</dbReference>
<dbReference type="PANTHER" id="PTHR30111:SF1">
    <property type="entry name" value="33 KDA CHAPERONIN"/>
    <property type="match status" value="1"/>
</dbReference>
<dbReference type="Pfam" id="PF01430">
    <property type="entry name" value="HSP33"/>
    <property type="match status" value="1"/>
</dbReference>
<dbReference type="PIRSF" id="PIRSF005261">
    <property type="entry name" value="Heat_shock_Hsp33"/>
    <property type="match status" value="1"/>
</dbReference>
<dbReference type="SUPFAM" id="SSF64397">
    <property type="entry name" value="Hsp33 domain"/>
    <property type="match status" value="1"/>
</dbReference>
<dbReference type="SUPFAM" id="SSF118352">
    <property type="entry name" value="HSP33 redox switch-like"/>
    <property type="match status" value="1"/>
</dbReference>